<protein>
    <recommendedName>
        <fullName evidence="1">Probable potassium transport system protein Kup 1</fullName>
    </recommendedName>
</protein>
<comment type="function">
    <text evidence="1">Transport of potassium into the cell. Likely operates as a K(+):H(+) symporter.</text>
</comment>
<comment type="catalytic activity">
    <reaction evidence="1">
        <text>K(+)(in) + H(+)(in) = K(+)(out) + H(+)(out)</text>
        <dbReference type="Rhea" id="RHEA:28490"/>
        <dbReference type="ChEBI" id="CHEBI:15378"/>
        <dbReference type="ChEBI" id="CHEBI:29103"/>
    </reaction>
    <physiologicalReaction direction="right-to-left" evidence="1">
        <dbReference type="Rhea" id="RHEA:28492"/>
    </physiologicalReaction>
</comment>
<comment type="subcellular location">
    <subcellularLocation>
        <location evidence="1">Cell inner membrane</location>
        <topology evidence="1">Multi-pass membrane protein</topology>
    </subcellularLocation>
</comment>
<comment type="similarity">
    <text evidence="1">Belongs to the HAK/KUP transporter (TC 2.A.72) family.</text>
</comment>
<organism>
    <name type="scientific">Ralstonia nicotianae (strain ATCC BAA-1114 / GMI1000)</name>
    <name type="common">Ralstonia solanacearum</name>
    <dbReference type="NCBI Taxonomy" id="267608"/>
    <lineage>
        <taxon>Bacteria</taxon>
        <taxon>Pseudomonadati</taxon>
        <taxon>Pseudomonadota</taxon>
        <taxon>Betaproteobacteria</taxon>
        <taxon>Burkholderiales</taxon>
        <taxon>Burkholderiaceae</taxon>
        <taxon>Ralstonia</taxon>
        <taxon>Ralstonia solanacearum species complex</taxon>
    </lineage>
</organism>
<name>KUP1_RALN1</name>
<accession>Q8XR16</accession>
<evidence type="ECO:0000255" key="1">
    <source>
        <dbReference type="HAMAP-Rule" id="MF_01522"/>
    </source>
</evidence>
<sequence>MLGAIGVVFGDIGTSPLYALKECFNPEHGVPFSTQTVYGVLSMLFWSMTLVVSIKYVVFVMRADNNGEGGILALTALAMRASSGGARTIRTLMLLGLLGASMFYGDAVITPAISVLSAVEGMEVMTPALQPWVLPLSLIVLVGLFLLQKHGTHVVGRLFGPVMLFWFVLLGLIGLFSVLRSPQILVALNPVHAIEFMFRHAVQAFIVFGSVFLALTGAEALYADMGHFGARPIRYAWFYIAMPCLLLNYFGQGALLLREPSALQNPFFLLMPTWAVAPTIVLATAATVIASQAVISGAFSMTAQAVHLGYAPRMKILYTSDVEIGQIYVPVVNYALLLLVVAVVLAFGKSDNLAAAYGIAVTTTMLLTTGLVTVVMRNAWKWSLPAVALLGTVFLAVDLSFFGANLLKVAAGGWFPLLLGGLIFFLMVTWHTGTQLLKARNVEGGIPLEPFMEGLLSHPPYRVDGTAVYLTPSIEFVPLALLHNLKHNHVLHSRVLFIHFRTQAVPYVEPAKRLVVKTIGDNLYAVAADFGFKETPAVDEIVRMVGERLGIVFEDMETSFFITRATVVPSQLPGMAMWREALFAWMQHNSAKPSDFFRIPANRLVELGSKVEI</sequence>
<reference key="1">
    <citation type="journal article" date="2002" name="Nature">
        <title>Genome sequence of the plant pathogen Ralstonia solanacearum.</title>
        <authorList>
            <person name="Salanoubat M."/>
            <person name="Genin S."/>
            <person name="Artiguenave F."/>
            <person name="Gouzy J."/>
            <person name="Mangenot S."/>
            <person name="Arlat M."/>
            <person name="Billault A."/>
            <person name="Brottier P."/>
            <person name="Camus J.-C."/>
            <person name="Cattolico L."/>
            <person name="Chandler M."/>
            <person name="Choisne N."/>
            <person name="Claudel-Renard C."/>
            <person name="Cunnac S."/>
            <person name="Demange N."/>
            <person name="Gaspin C."/>
            <person name="Lavie M."/>
            <person name="Moisan A."/>
            <person name="Robert C."/>
            <person name="Saurin W."/>
            <person name="Schiex T."/>
            <person name="Siguier P."/>
            <person name="Thebault P."/>
            <person name="Whalen M."/>
            <person name="Wincker P."/>
            <person name="Levy M."/>
            <person name="Weissenbach J."/>
            <person name="Boucher C.A."/>
        </authorList>
    </citation>
    <scope>NUCLEOTIDE SEQUENCE [LARGE SCALE GENOMIC DNA]</scope>
    <source>
        <strain>ATCC BAA-1114 / GMI1000</strain>
    </source>
</reference>
<proteinExistence type="inferred from homology"/>
<geneLocation type="plasmid">
    <name>megaplasmid Rsp</name>
</geneLocation>
<keyword id="KW-0997">Cell inner membrane</keyword>
<keyword id="KW-1003">Cell membrane</keyword>
<keyword id="KW-0406">Ion transport</keyword>
<keyword id="KW-0472">Membrane</keyword>
<keyword id="KW-0614">Plasmid</keyword>
<keyword id="KW-0630">Potassium</keyword>
<keyword id="KW-0633">Potassium transport</keyword>
<keyword id="KW-1185">Reference proteome</keyword>
<keyword id="KW-0769">Symport</keyword>
<keyword id="KW-0812">Transmembrane</keyword>
<keyword id="KW-1133">Transmembrane helix</keyword>
<keyword id="KW-0813">Transport</keyword>
<dbReference type="EMBL" id="AL646053">
    <property type="protein sequence ID" value="CAD18203.1"/>
    <property type="molecule type" value="Genomic_DNA"/>
</dbReference>
<dbReference type="STRING" id="267608.RSp1052"/>
<dbReference type="EnsemblBacteria" id="CAD18203">
    <property type="protein sequence ID" value="CAD18203"/>
    <property type="gene ID" value="RSp1052"/>
</dbReference>
<dbReference type="KEGG" id="rso:RSp1052"/>
<dbReference type="eggNOG" id="COG3158">
    <property type="taxonomic scope" value="Bacteria"/>
</dbReference>
<dbReference type="HOGENOM" id="CLU_008142_4_2_4"/>
<dbReference type="Proteomes" id="UP000001436">
    <property type="component" value="Plasmid megaplasmid Rsp"/>
</dbReference>
<dbReference type="GO" id="GO:0005886">
    <property type="term" value="C:plasma membrane"/>
    <property type="evidence" value="ECO:0007669"/>
    <property type="project" value="UniProtKB-SubCell"/>
</dbReference>
<dbReference type="GO" id="GO:0015079">
    <property type="term" value="F:potassium ion transmembrane transporter activity"/>
    <property type="evidence" value="ECO:0007669"/>
    <property type="project" value="UniProtKB-UniRule"/>
</dbReference>
<dbReference type="GO" id="GO:0015293">
    <property type="term" value="F:symporter activity"/>
    <property type="evidence" value="ECO:0007669"/>
    <property type="project" value="UniProtKB-UniRule"/>
</dbReference>
<dbReference type="HAMAP" id="MF_01522">
    <property type="entry name" value="Kup"/>
    <property type="match status" value="1"/>
</dbReference>
<dbReference type="InterPro" id="IPR003855">
    <property type="entry name" value="K+_transporter"/>
</dbReference>
<dbReference type="InterPro" id="IPR053952">
    <property type="entry name" value="K_trans_C"/>
</dbReference>
<dbReference type="InterPro" id="IPR053951">
    <property type="entry name" value="K_trans_N"/>
</dbReference>
<dbReference type="InterPro" id="IPR023051">
    <property type="entry name" value="Kup"/>
</dbReference>
<dbReference type="PANTHER" id="PTHR30540:SF79">
    <property type="entry name" value="LOW AFFINITY POTASSIUM TRANSPORT SYSTEM PROTEIN KUP"/>
    <property type="match status" value="1"/>
</dbReference>
<dbReference type="PANTHER" id="PTHR30540">
    <property type="entry name" value="OSMOTIC STRESS POTASSIUM TRANSPORTER"/>
    <property type="match status" value="1"/>
</dbReference>
<dbReference type="Pfam" id="PF02705">
    <property type="entry name" value="K_trans"/>
    <property type="match status" value="1"/>
</dbReference>
<dbReference type="Pfam" id="PF22776">
    <property type="entry name" value="K_trans_C"/>
    <property type="match status" value="1"/>
</dbReference>
<gene>
    <name evidence="1" type="primary">kup1</name>
    <name type="ordered locus">RSp1052</name>
    <name type="ORF">RS02389</name>
</gene>
<feature type="chain" id="PRO_0000209044" description="Probable potassium transport system protein Kup 1">
    <location>
        <begin position="1"/>
        <end position="613"/>
    </location>
</feature>
<feature type="transmembrane region" description="Helical" evidence="1">
    <location>
        <begin position="40"/>
        <end position="60"/>
    </location>
</feature>
<feature type="transmembrane region" description="Helical" evidence="1">
    <location>
        <begin position="93"/>
        <end position="113"/>
    </location>
</feature>
<feature type="transmembrane region" description="Helical" evidence="1">
    <location>
        <begin position="127"/>
        <end position="147"/>
    </location>
</feature>
<feature type="transmembrane region" description="Helical" evidence="1">
    <location>
        <begin position="158"/>
        <end position="178"/>
    </location>
</feature>
<feature type="transmembrane region" description="Helical" evidence="1">
    <location>
        <begin position="201"/>
        <end position="221"/>
    </location>
</feature>
<feature type="transmembrane region" description="Helical" evidence="1">
    <location>
        <begin position="237"/>
        <end position="257"/>
    </location>
</feature>
<feature type="transmembrane region" description="Helical" evidence="1">
    <location>
        <begin position="266"/>
        <end position="286"/>
    </location>
</feature>
<feature type="transmembrane region" description="Helical" evidence="1">
    <location>
        <begin position="288"/>
        <end position="308"/>
    </location>
</feature>
<feature type="transmembrane region" description="Helical" evidence="1">
    <location>
        <begin position="327"/>
        <end position="347"/>
    </location>
</feature>
<feature type="transmembrane region" description="Helical" evidence="1">
    <location>
        <begin position="356"/>
        <end position="376"/>
    </location>
</feature>
<feature type="transmembrane region" description="Helical" evidence="1">
    <location>
        <begin position="384"/>
        <end position="404"/>
    </location>
</feature>
<feature type="transmembrane region" description="Helical" evidence="1">
    <location>
        <begin position="409"/>
        <end position="429"/>
    </location>
</feature>